<reference key="1">
    <citation type="journal article" date="1999" name="Gene">
        <title>A rhizobial homolog of IHF stimulates transcription of dctA in Rhizobium leguminosarum but not in Sinorhizobium meliloti.</title>
        <authorList>
            <person name="Sojda J. III"/>
            <person name="Gu B."/>
            <person name="Lee J."/>
            <person name="Hoover T.R."/>
            <person name="Nixon B.T."/>
        </authorList>
    </citation>
    <scope>PROTEIN SEQUENCE</scope>
    <source>
        <strain>CWR 538</strain>
    </source>
</reference>
<name>DBH3_RHILE</name>
<evidence type="ECO:0000305" key="1"/>
<organism>
    <name type="scientific">Rhizobium leguminosarum</name>
    <dbReference type="NCBI Taxonomy" id="384"/>
    <lineage>
        <taxon>Bacteria</taxon>
        <taxon>Pseudomonadati</taxon>
        <taxon>Pseudomonadota</taxon>
        <taxon>Alphaproteobacteria</taxon>
        <taxon>Hyphomicrobiales</taxon>
        <taxon>Rhizobiaceae</taxon>
        <taxon>Rhizobium/Agrobacterium group</taxon>
        <taxon>Rhizobium</taxon>
    </lineage>
</organism>
<protein>
    <recommendedName>
        <fullName>DNA-binding protein H3-RL</fullName>
    </recommendedName>
</protein>
<proteinExistence type="evidence at protein level"/>
<comment type="function">
    <text>Histone-like DNA-binding protein which is capable of wrapping DNA to stabilize it, and thus to prevent its denaturation under extreme environmental conditions.</text>
</comment>
<comment type="similarity">
    <text evidence="1">Belongs to the bacterial histone-like protein family.</text>
</comment>
<accession>P80605</accession>
<sequence>MNKNELVSAVAERAGL</sequence>
<dbReference type="GO" id="GO:0003677">
    <property type="term" value="F:DNA binding"/>
    <property type="evidence" value="ECO:0007669"/>
    <property type="project" value="UniProtKB-KW"/>
</dbReference>
<dbReference type="GO" id="GO:0030261">
    <property type="term" value="P:chromosome condensation"/>
    <property type="evidence" value="ECO:0007669"/>
    <property type="project" value="UniProtKB-KW"/>
</dbReference>
<keyword id="KW-0903">Direct protein sequencing</keyword>
<keyword id="KW-0226">DNA condensation</keyword>
<keyword id="KW-0238">DNA-binding</keyword>
<feature type="chain" id="PRO_0000104958" description="DNA-binding protein H3-RL">
    <location>
        <begin position="1"/>
        <end position="16" status="greater than"/>
    </location>
</feature>
<feature type="non-terminal residue">
    <location>
        <position position="16"/>
    </location>
</feature>